<evidence type="ECO:0000255" key="1">
    <source>
        <dbReference type="HAMAP-Rule" id="MF_00148"/>
    </source>
</evidence>
<keyword id="KW-0963">Cytoplasm</keyword>
<keyword id="KW-0227">DNA damage</keyword>
<keyword id="KW-0234">DNA repair</keyword>
<keyword id="KW-0378">Hydrolase</keyword>
<feature type="chain" id="PRO_1000071501" description="Uracil-DNA glycosylase">
    <location>
        <begin position="1"/>
        <end position="226"/>
    </location>
</feature>
<feature type="active site" description="Proton acceptor" evidence="1">
    <location>
        <position position="64"/>
    </location>
</feature>
<protein>
    <recommendedName>
        <fullName evidence="1">Uracil-DNA glycosylase</fullName>
        <shortName evidence="1">UDG</shortName>
        <ecNumber evidence="1">3.2.2.27</ecNumber>
    </recommendedName>
</protein>
<sequence length="226" mass="25446">MSESLTWHDVIGNEKQQAYFQQTLQFVESQRQAGKVIYPPAKDVFNAFRFTEFGDVKVVILGQDPYHGPNQAHGLCFSVLPGVKTPPSLVNIYKELAQDIPGFQIPPHGYLQSWAQQGVLLLNTVLTVEQGMAHSHANTGWETFTDRVIDALNQHRNGLIFLLWGSHAQKKGQMIDRQRHHVLMAPHPSPLSAHRGFLGCRHFSKTNQLLQAQGIAPINWQPELES</sequence>
<comment type="function">
    <text evidence="1">Excises uracil residues from the DNA which can arise as a result of misincorporation of dUMP residues by DNA polymerase or due to deamination of cytosine.</text>
</comment>
<comment type="catalytic activity">
    <reaction evidence="1">
        <text>Hydrolyzes single-stranded DNA or mismatched double-stranded DNA and polynucleotides, releasing free uracil.</text>
        <dbReference type="EC" id="3.2.2.27"/>
    </reaction>
</comment>
<comment type="subcellular location">
    <subcellularLocation>
        <location evidence="1">Cytoplasm</location>
    </subcellularLocation>
</comment>
<comment type="similarity">
    <text evidence="1">Belongs to the uracil-DNA glycosylase (UDG) superfamily. UNG family.</text>
</comment>
<organism>
    <name type="scientific">Vibrio cholerae serotype O1 (strain ATCC 39541 / Classical Ogawa 395 / O395)</name>
    <dbReference type="NCBI Taxonomy" id="345073"/>
    <lineage>
        <taxon>Bacteria</taxon>
        <taxon>Pseudomonadati</taxon>
        <taxon>Pseudomonadota</taxon>
        <taxon>Gammaproteobacteria</taxon>
        <taxon>Vibrionales</taxon>
        <taxon>Vibrionaceae</taxon>
        <taxon>Vibrio</taxon>
    </lineage>
</organism>
<name>UNG_VIBC3</name>
<accession>A5F5R5</accession>
<accession>C3M482</accession>
<gene>
    <name evidence="1" type="primary">ung</name>
    <name type="ordered locus">VC0395_A1938</name>
    <name type="ordered locus">VC395_2474</name>
</gene>
<reference key="1">
    <citation type="submission" date="2007-03" db="EMBL/GenBank/DDBJ databases">
        <authorList>
            <person name="Heidelberg J."/>
        </authorList>
    </citation>
    <scope>NUCLEOTIDE SEQUENCE [LARGE SCALE GENOMIC DNA]</scope>
    <source>
        <strain>ATCC 39541 / Classical Ogawa 395 / O395</strain>
    </source>
</reference>
<reference key="2">
    <citation type="journal article" date="2008" name="PLoS ONE">
        <title>A recalibrated molecular clock and independent origins for the cholera pandemic clones.</title>
        <authorList>
            <person name="Feng L."/>
            <person name="Reeves P.R."/>
            <person name="Lan R."/>
            <person name="Ren Y."/>
            <person name="Gao C."/>
            <person name="Zhou Z."/>
            <person name="Ren Y."/>
            <person name="Cheng J."/>
            <person name="Wang W."/>
            <person name="Wang J."/>
            <person name="Qian W."/>
            <person name="Li D."/>
            <person name="Wang L."/>
        </authorList>
    </citation>
    <scope>NUCLEOTIDE SEQUENCE [LARGE SCALE GENOMIC DNA]</scope>
    <source>
        <strain>ATCC 39541 / Classical Ogawa 395 / O395</strain>
    </source>
</reference>
<proteinExistence type="inferred from homology"/>
<dbReference type="EC" id="3.2.2.27" evidence="1"/>
<dbReference type="EMBL" id="CP000627">
    <property type="protein sequence ID" value="ABQ21877.1"/>
    <property type="molecule type" value="Genomic_DNA"/>
</dbReference>
<dbReference type="EMBL" id="CP001235">
    <property type="protein sequence ID" value="ACP10464.1"/>
    <property type="molecule type" value="Genomic_DNA"/>
</dbReference>
<dbReference type="RefSeq" id="WP_000004496.1">
    <property type="nucleotide sequence ID" value="NZ_JAACZH010000008.1"/>
</dbReference>
<dbReference type="SMR" id="A5F5R5"/>
<dbReference type="KEGG" id="vco:VC0395_A1938"/>
<dbReference type="KEGG" id="vcr:VC395_2474"/>
<dbReference type="PATRIC" id="fig|345073.21.peg.2378"/>
<dbReference type="eggNOG" id="COG0692">
    <property type="taxonomic scope" value="Bacteria"/>
</dbReference>
<dbReference type="HOGENOM" id="CLU_032162_3_0_6"/>
<dbReference type="OrthoDB" id="9804372at2"/>
<dbReference type="Proteomes" id="UP000000249">
    <property type="component" value="Chromosome 2"/>
</dbReference>
<dbReference type="GO" id="GO:0005737">
    <property type="term" value="C:cytoplasm"/>
    <property type="evidence" value="ECO:0007669"/>
    <property type="project" value="UniProtKB-SubCell"/>
</dbReference>
<dbReference type="GO" id="GO:0004844">
    <property type="term" value="F:uracil DNA N-glycosylase activity"/>
    <property type="evidence" value="ECO:0007669"/>
    <property type="project" value="UniProtKB-UniRule"/>
</dbReference>
<dbReference type="GO" id="GO:0097510">
    <property type="term" value="P:base-excision repair, AP site formation via deaminated base removal"/>
    <property type="evidence" value="ECO:0007669"/>
    <property type="project" value="TreeGrafter"/>
</dbReference>
<dbReference type="CDD" id="cd10027">
    <property type="entry name" value="UDG-F1-like"/>
    <property type="match status" value="1"/>
</dbReference>
<dbReference type="FunFam" id="3.40.470.10:FF:000001">
    <property type="entry name" value="Uracil-DNA glycosylase"/>
    <property type="match status" value="1"/>
</dbReference>
<dbReference type="Gene3D" id="3.40.470.10">
    <property type="entry name" value="Uracil-DNA glycosylase-like domain"/>
    <property type="match status" value="1"/>
</dbReference>
<dbReference type="HAMAP" id="MF_00148">
    <property type="entry name" value="UDG"/>
    <property type="match status" value="1"/>
</dbReference>
<dbReference type="InterPro" id="IPR002043">
    <property type="entry name" value="UDG_fam1"/>
</dbReference>
<dbReference type="InterPro" id="IPR018085">
    <property type="entry name" value="Ura-DNA_Glyclase_AS"/>
</dbReference>
<dbReference type="InterPro" id="IPR005122">
    <property type="entry name" value="Uracil-DNA_glycosylase-like"/>
</dbReference>
<dbReference type="InterPro" id="IPR036895">
    <property type="entry name" value="Uracil-DNA_glycosylase-like_sf"/>
</dbReference>
<dbReference type="NCBIfam" id="NF003588">
    <property type="entry name" value="PRK05254.1-1"/>
    <property type="match status" value="1"/>
</dbReference>
<dbReference type="NCBIfam" id="NF003589">
    <property type="entry name" value="PRK05254.1-2"/>
    <property type="match status" value="1"/>
</dbReference>
<dbReference type="NCBIfam" id="NF003591">
    <property type="entry name" value="PRK05254.1-4"/>
    <property type="match status" value="1"/>
</dbReference>
<dbReference type="NCBIfam" id="NF003592">
    <property type="entry name" value="PRK05254.1-5"/>
    <property type="match status" value="1"/>
</dbReference>
<dbReference type="NCBIfam" id="TIGR00628">
    <property type="entry name" value="ung"/>
    <property type="match status" value="1"/>
</dbReference>
<dbReference type="PANTHER" id="PTHR11264">
    <property type="entry name" value="URACIL-DNA GLYCOSYLASE"/>
    <property type="match status" value="1"/>
</dbReference>
<dbReference type="PANTHER" id="PTHR11264:SF0">
    <property type="entry name" value="URACIL-DNA GLYCOSYLASE"/>
    <property type="match status" value="1"/>
</dbReference>
<dbReference type="Pfam" id="PF03167">
    <property type="entry name" value="UDG"/>
    <property type="match status" value="1"/>
</dbReference>
<dbReference type="SMART" id="SM00986">
    <property type="entry name" value="UDG"/>
    <property type="match status" value="1"/>
</dbReference>
<dbReference type="SMART" id="SM00987">
    <property type="entry name" value="UreE_C"/>
    <property type="match status" value="1"/>
</dbReference>
<dbReference type="SUPFAM" id="SSF52141">
    <property type="entry name" value="Uracil-DNA glycosylase-like"/>
    <property type="match status" value="1"/>
</dbReference>
<dbReference type="PROSITE" id="PS00130">
    <property type="entry name" value="U_DNA_GLYCOSYLASE"/>
    <property type="match status" value="1"/>
</dbReference>